<sequence>MSGGGTETPVACEAAQGGGGKKRDSLGTAGAAHLIIKDLGEIHSRLLDHRPVTQGEIRYFVKEFEEKRGLRELRVLENLKNMIQETNERMLPKCRETMQGGLEETLQRLQAATDSIHRLQQREQERKKVINDHLTASEKQRMLQWEEFLRGQPQRRAEVDAEHRKAMERLREQYAAMEKDLAKFSTF</sequence>
<comment type="function">
    <text evidence="1">Component of the BLOC-1 complex, a complex that is required for normal biogenesis of lysosome-related organelles (LRO), such as platelet dense granules and melanosomes. In concert with the AP-3 complex, the BLOC-1 complex is required to target membrane protein cargos into vesicles assembled at cell bodies for delivery into neurites and nerve terminals. The BLOC-1 complex, in association with SNARE proteins, is also proposed to be involved in neurite extension. Plays a role in intracellular vesicle trafficking (By similarity).</text>
</comment>
<comment type="subunit">
    <text evidence="1 4">Octamer composed of one copy each BLOC1S1, BLOC1S2, BLOC1S3, BLOC1S4, BLOC1S5, BLOC1S6, DTNBP1/BLOC1S7 and SNAPIN/BLOC1S8. The BLOC-1 complex associates with the AP-3 protein complex and membrane protein cargos. Interacts with BLOC1S4, BLOC1S6, DTNBP1/BLOC1S7 and PI4K2A (By similarity). Component of the biogenesis of lysosome-related organelles complex 1 (BLOC-1) composed of BLOC1S1, BLOC1S2, BLOC1S3, BLOC1S4, BLOC1S5, BLOC1S6, DTNBP1/BLOC1S7 and SNAPIN/BLOC1S8.</text>
</comment>
<comment type="similarity">
    <text evidence="5">Belongs to the BLOC1S5 family.</text>
</comment>
<dbReference type="EMBL" id="CH473977">
    <property type="protein sequence ID" value="EDL98252.1"/>
    <property type="molecule type" value="Genomic_DNA"/>
</dbReference>
<dbReference type="EMBL" id="BC166529">
    <property type="protein sequence ID" value="AAI66529.1"/>
    <property type="molecule type" value="mRNA"/>
</dbReference>
<dbReference type="RefSeq" id="NP_001100817.1">
    <property type="nucleotide sequence ID" value="NM_001107347.1"/>
</dbReference>
<dbReference type="SMR" id="B2GV52"/>
<dbReference type="FunCoup" id="B2GV52">
    <property type="interactions" value="3354"/>
</dbReference>
<dbReference type="STRING" id="10116.ENSRNOP00000022108"/>
<dbReference type="PhosphoSitePlus" id="B2GV52"/>
<dbReference type="jPOST" id="B2GV52"/>
<dbReference type="PaxDb" id="10116-ENSRNOP00000022108"/>
<dbReference type="PeptideAtlas" id="B2GV52"/>
<dbReference type="Ensembl" id="ENSRNOT00000022108.6">
    <property type="protein sequence ID" value="ENSRNOP00000022108.4"/>
    <property type="gene ID" value="ENSRNOG00000016497.6"/>
</dbReference>
<dbReference type="GeneID" id="306868"/>
<dbReference type="KEGG" id="rno:306868"/>
<dbReference type="UCSC" id="RGD:1306846">
    <property type="organism name" value="rat"/>
</dbReference>
<dbReference type="AGR" id="RGD:1306846"/>
<dbReference type="CTD" id="63915"/>
<dbReference type="RGD" id="1306846">
    <property type="gene designation" value="Bloc1s5"/>
</dbReference>
<dbReference type="eggNOG" id="ENOG502S2QH">
    <property type="taxonomic scope" value="Eukaryota"/>
</dbReference>
<dbReference type="GeneTree" id="ENSGT00390000016974"/>
<dbReference type="HOGENOM" id="CLU_110751_0_0_1"/>
<dbReference type="InParanoid" id="B2GV52"/>
<dbReference type="OMA" id="MHGNLNE"/>
<dbReference type="OrthoDB" id="18964at2759"/>
<dbReference type="PhylomeDB" id="B2GV52"/>
<dbReference type="TreeFam" id="TF332943"/>
<dbReference type="PRO" id="PR:B2GV52"/>
<dbReference type="Proteomes" id="UP000002494">
    <property type="component" value="Chromosome 17"/>
</dbReference>
<dbReference type="Proteomes" id="UP000234681">
    <property type="component" value="Chromosome 17"/>
</dbReference>
<dbReference type="Bgee" id="ENSRNOG00000016497">
    <property type="expression patterns" value="Expressed in heart and 20 other cell types or tissues"/>
</dbReference>
<dbReference type="GO" id="GO:1904115">
    <property type="term" value="C:axon cytoplasm"/>
    <property type="evidence" value="ECO:0007669"/>
    <property type="project" value="GOC"/>
</dbReference>
<dbReference type="GO" id="GO:0031083">
    <property type="term" value="C:BLOC-1 complex"/>
    <property type="evidence" value="ECO:0000250"/>
    <property type="project" value="UniProtKB"/>
</dbReference>
<dbReference type="GO" id="GO:1990742">
    <property type="term" value="C:microvesicle"/>
    <property type="evidence" value="ECO:0000266"/>
    <property type="project" value="RGD"/>
</dbReference>
<dbReference type="GO" id="GO:0030133">
    <property type="term" value="C:transport vesicle"/>
    <property type="evidence" value="ECO:0000266"/>
    <property type="project" value="RGD"/>
</dbReference>
<dbReference type="GO" id="GO:0008089">
    <property type="term" value="P:anterograde axonal transport"/>
    <property type="evidence" value="ECO:0000250"/>
    <property type="project" value="UniProtKB"/>
</dbReference>
<dbReference type="GO" id="GO:0048490">
    <property type="term" value="P:anterograde synaptic vesicle transport"/>
    <property type="evidence" value="ECO:0000250"/>
    <property type="project" value="UniProtKB"/>
</dbReference>
<dbReference type="GO" id="GO:0048066">
    <property type="term" value="P:developmental pigmentation"/>
    <property type="evidence" value="ECO:0000266"/>
    <property type="project" value="RGD"/>
</dbReference>
<dbReference type="GO" id="GO:0035646">
    <property type="term" value="P:endosome to melanosome transport"/>
    <property type="evidence" value="ECO:0000266"/>
    <property type="project" value="RGD"/>
</dbReference>
<dbReference type="GO" id="GO:0032402">
    <property type="term" value="P:melanosome transport"/>
    <property type="evidence" value="ECO:0000266"/>
    <property type="project" value="RGD"/>
</dbReference>
<dbReference type="GO" id="GO:0031175">
    <property type="term" value="P:neuron projection development"/>
    <property type="evidence" value="ECO:0000250"/>
    <property type="project" value="UniProtKB"/>
</dbReference>
<dbReference type="GO" id="GO:0032474">
    <property type="term" value="P:otolith morphogenesis"/>
    <property type="evidence" value="ECO:0000266"/>
    <property type="project" value="RGD"/>
</dbReference>
<dbReference type="GO" id="GO:0050942">
    <property type="term" value="P:positive regulation of pigment cell differentiation"/>
    <property type="evidence" value="ECO:0000266"/>
    <property type="project" value="RGD"/>
</dbReference>
<dbReference type="GO" id="GO:0016192">
    <property type="term" value="P:vesicle-mediated transport"/>
    <property type="evidence" value="ECO:0000266"/>
    <property type="project" value="RGD"/>
</dbReference>
<dbReference type="InterPro" id="IPR017243">
    <property type="entry name" value="Bloc1s5"/>
</dbReference>
<dbReference type="PANTHER" id="PTHR31784">
    <property type="entry name" value="BIOGENESIS OF LYSOSOME-RELATED ORGANELLES COMPLEX 1 SUBUNIT 5"/>
    <property type="match status" value="1"/>
</dbReference>
<dbReference type="PANTHER" id="PTHR31784:SF2">
    <property type="entry name" value="BIOGENESIS OF LYSOSOME-RELATED ORGANELLES COMPLEX 1 SUBUNIT 5"/>
    <property type="match status" value="1"/>
</dbReference>
<dbReference type="Pfam" id="PF14942">
    <property type="entry name" value="Muted"/>
    <property type="match status" value="1"/>
</dbReference>
<dbReference type="PIRSF" id="PIRSF037610">
    <property type="entry name" value="BLOC-1_complex_muted_subunit"/>
    <property type="match status" value="1"/>
</dbReference>
<evidence type="ECO:0000250" key="1"/>
<evidence type="ECO:0000250" key="2">
    <source>
        <dbReference type="UniProtKB" id="Q8TDH9"/>
    </source>
</evidence>
<evidence type="ECO:0000256" key="3">
    <source>
        <dbReference type="SAM" id="MobiDB-lite"/>
    </source>
</evidence>
<evidence type="ECO:0000269" key="4">
    <source>
    </source>
</evidence>
<evidence type="ECO:0000305" key="5"/>
<name>BL1S5_RAT</name>
<gene>
    <name type="primary">Bloc1s5</name>
    <name type="synonym">Mu</name>
    <name type="synonym">Muted</name>
</gene>
<reference key="1">
    <citation type="submission" date="2005-07" db="EMBL/GenBank/DDBJ databases">
        <authorList>
            <person name="Mural R.J."/>
            <person name="Adams M.D."/>
            <person name="Myers E.W."/>
            <person name="Smith H.O."/>
            <person name="Venter J.C."/>
        </authorList>
    </citation>
    <scope>NUCLEOTIDE SEQUENCE [LARGE SCALE GENOMIC DNA]</scope>
</reference>
<reference key="2">
    <citation type="journal article" date="2004" name="Genome Res.">
        <title>The status, quality, and expansion of the NIH full-length cDNA project: the Mammalian Gene Collection (MGC).</title>
        <authorList>
            <consortium name="The MGC Project Team"/>
        </authorList>
    </citation>
    <scope>NUCLEOTIDE SEQUENCE [LARGE SCALE MRNA]</scope>
    <source>
        <tissue>Heart</tissue>
    </source>
</reference>
<reference key="3">
    <citation type="journal article" date="2006" name="Mol. Biol. Cell">
        <title>BLOC-1 complex deficiency alters the targeting of adaptor protein complex-3 cargoes.</title>
        <authorList>
            <person name="Salazar G."/>
            <person name="Craige B."/>
            <person name="Styers M.L."/>
            <person name="Newell-Litwa K.A."/>
            <person name="Doucette M.M."/>
            <person name="Wainer B.H."/>
            <person name="Falcon-Perez J.M."/>
            <person name="Dell'Angelica E.C."/>
            <person name="Peden A.A."/>
            <person name="Werner E."/>
            <person name="Faundez V."/>
        </authorList>
    </citation>
    <scope>IDENTIFICATION IN THE BLOC-1 COMPLEX</scope>
    <scope>IDENTIFICATION BY MASS SPECTROMETRY</scope>
</reference>
<protein>
    <recommendedName>
        <fullName>Biogenesis of lysosome-related organelles complex 1 subunit 5</fullName>
        <shortName>BLOC-1 subunit 5</shortName>
    </recommendedName>
    <alternativeName>
        <fullName>Protein Muted homolog</fullName>
    </alternativeName>
</protein>
<accession>B2GV52</accession>
<feature type="initiator methionine" description="Removed" evidence="2">
    <location>
        <position position="1"/>
    </location>
</feature>
<feature type="chain" id="PRO_0000420189" description="Biogenesis of lysosome-related organelles complex 1 subunit 5">
    <location>
        <begin position="2"/>
        <end position="187"/>
    </location>
</feature>
<feature type="region of interest" description="Disordered" evidence="3">
    <location>
        <begin position="1"/>
        <end position="27"/>
    </location>
</feature>
<feature type="modified residue" description="N-acetylserine" evidence="2">
    <location>
        <position position="2"/>
    </location>
</feature>
<proteinExistence type="evidence at protein level"/>
<keyword id="KW-0007">Acetylation</keyword>
<keyword id="KW-1185">Reference proteome</keyword>
<organism>
    <name type="scientific">Rattus norvegicus</name>
    <name type="common">Rat</name>
    <dbReference type="NCBI Taxonomy" id="10116"/>
    <lineage>
        <taxon>Eukaryota</taxon>
        <taxon>Metazoa</taxon>
        <taxon>Chordata</taxon>
        <taxon>Craniata</taxon>
        <taxon>Vertebrata</taxon>
        <taxon>Euteleostomi</taxon>
        <taxon>Mammalia</taxon>
        <taxon>Eutheria</taxon>
        <taxon>Euarchontoglires</taxon>
        <taxon>Glires</taxon>
        <taxon>Rodentia</taxon>
        <taxon>Myomorpha</taxon>
        <taxon>Muroidea</taxon>
        <taxon>Muridae</taxon>
        <taxon>Murinae</taxon>
        <taxon>Rattus</taxon>
    </lineage>
</organism>